<accession>Q6NY52</accession>
<accession>Q7ZV69</accession>
<proteinExistence type="evidence at transcript level"/>
<organism>
    <name type="scientific">Danio rerio</name>
    <name type="common">Zebrafish</name>
    <name type="synonym">Brachydanio rerio</name>
    <dbReference type="NCBI Taxonomy" id="7955"/>
    <lineage>
        <taxon>Eukaryota</taxon>
        <taxon>Metazoa</taxon>
        <taxon>Chordata</taxon>
        <taxon>Craniata</taxon>
        <taxon>Vertebrata</taxon>
        <taxon>Euteleostomi</taxon>
        <taxon>Actinopterygii</taxon>
        <taxon>Neopterygii</taxon>
        <taxon>Teleostei</taxon>
        <taxon>Ostariophysi</taxon>
        <taxon>Cypriniformes</taxon>
        <taxon>Danionidae</taxon>
        <taxon>Danioninae</taxon>
        <taxon>Danio</taxon>
    </lineage>
</organism>
<sequence length="684" mass="77833">MSSDAVKKRKPKVIRSEAGTPETKRGRAESEQDVRVYNEEVELEGRDPQQDYTLYKETCAALAKLMSEIQELKTSGAKDGSAEIELRRKQSSIHFITLKKLNRLAHMRLKKGRDQTHEAKQRVDVLHLQLQNLLYEVMHLQKEIGKCLEFKSQHEEIELVSEDEFFQDAPAEISRPQVTREDHHQLTLARLDWELDQRKRLAEQYKTSLSSKEKIQKAIEQKREYLSSLQPGLHNIMQASLPVQEYLSMPFEHMQKQAEVARHLPPPLYVLFVQAGAYGQACDKNLTVSIRGDVDEAKALSRPPEDSQDDESDSDAEEEQQNTKRRRPTVGVQLDDKRKEMLRRHPLSLGIDLKCKDGSVLHLYFYYLMNLNILTVKTKVSTSVDLSGAISAGELLNSESLLNCLYASDHGNETPNPANRYQFDKVGITTFADYVSDLGHPYVWVQKLSGLQFSSDAAQSELSGSALSASHMEKSMKLLRGRLQSRLALHKQFSSLEHSIVPVSSECQHLFPAKVVSGLTRWTMMSHQEFTELSFVQHVLKAGLVSETDLFFKAVVERGTARLLAAVVVNPRYPEVTPLFSLSLLWKGERSGRTDDNLRAMESEVNVFRAELQGPRPGLQLLTNQIQRLCMCLDVYLETESQVSDGSEGPKEFPREKMCLRTARGPSRLKPFKYNHPQGFFSHR</sequence>
<protein>
    <recommendedName>
        <fullName>THO complex subunit 5 homolog</fullName>
    </recommendedName>
</protein>
<dbReference type="EMBL" id="BC045980">
    <property type="protein sequence ID" value="AAH45980.1"/>
    <property type="molecule type" value="mRNA"/>
</dbReference>
<dbReference type="EMBL" id="BC066736">
    <property type="protein sequence ID" value="AAH66736.1"/>
    <property type="molecule type" value="mRNA"/>
</dbReference>
<dbReference type="RefSeq" id="NP_997857.1">
    <property type="nucleotide sequence ID" value="NM_212692.1"/>
</dbReference>
<dbReference type="SMR" id="Q6NY52"/>
<dbReference type="FunCoup" id="Q6NY52">
    <property type="interactions" value="2002"/>
</dbReference>
<dbReference type="STRING" id="7955.ENSDARP00000055844"/>
<dbReference type="PaxDb" id="7955-ENSDARP00000105284"/>
<dbReference type="GeneID" id="325064"/>
<dbReference type="KEGG" id="dre:325064"/>
<dbReference type="AGR" id="ZFIN:ZDB-GENE-030131-3789"/>
<dbReference type="CTD" id="8563"/>
<dbReference type="ZFIN" id="ZDB-GENE-030131-3789">
    <property type="gene designation" value="thoc5"/>
</dbReference>
<dbReference type="eggNOG" id="KOG2216">
    <property type="taxonomic scope" value="Eukaryota"/>
</dbReference>
<dbReference type="InParanoid" id="Q6NY52"/>
<dbReference type="OrthoDB" id="20582at2759"/>
<dbReference type="PhylomeDB" id="Q6NY52"/>
<dbReference type="PRO" id="PR:Q6NY52"/>
<dbReference type="Proteomes" id="UP000000437">
    <property type="component" value="Chromosome 25"/>
</dbReference>
<dbReference type="GO" id="GO:0005737">
    <property type="term" value="C:cytoplasm"/>
    <property type="evidence" value="ECO:0007669"/>
    <property type="project" value="UniProtKB-SubCell"/>
</dbReference>
<dbReference type="GO" id="GO:0016607">
    <property type="term" value="C:nuclear speck"/>
    <property type="evidence" value="ECO:0007669"/>
    <property type="project" value="UniProtKB-SubCell"/>
</dbReference>
<dbReference type="GO" id="GO:0000445">
    <property type="term" value="C:THO complex part of transcription export complex"/>
    <property type="evidence" value="ECO:0000318"/>
    <property type="project" value="GO_Central"/>
</dbReference>
<dbReference type="GO" id="GO:0003729">
    <property type="term" value="F:mRNA binding"/>
    <property type="evidence" value="ECO:0000318"/>
    <property type="project" value="GO_Central"/>
</dbReference>
<dbReference type="GO" id="GO:0030154">
    <property type="term" value="P:cell differentiation"/>
    <property type="evidence" value="ECO:0007669"/>
    <property type="project" value="UniProtKB-KW"/>
</dbReference>
<dbReference type="GO" id="GO:0006406">
    <property type="term" value="P:mRNA export from nucleus"/>
    <property type="evidence" value="ECO:0000318"/>
    <property type="project" value="GO_Central"/>
</dbReference>
<dbReference type="GO" id="GO:0006397">
    <property type="term" value="P:mRNA processing"/>
    <property type="evidence" value="ECO:0007669"/>
    <property type="project" value="UniProtKB-KW"/>
</dbReference>
<dbReference type="GO" id="GO:0008380">
    <property type="term" value="P:RNA splicing"/>
    <property type="evidence" value="ECO:0007669"/>
    <property type="project" value="UniProtKB-KW"/>
</dbReference>
<dbReference type="InterPro" id="IPR019163">
    <property type="entry name" value="THO_Thoc5"/>
</dbReference>
<dbReference type="PANTHER" id="PTHR13375">
    <property type="entry name" value="FMS INTERACTING PROTEIN"/>
    <property type="match status" value="1"/>
</dbReference>
<dbReference type="PANTHER" id="PTHR13375:SF3">
    <property type="entry name" value="THO COMPLEX SUBUNIT 5 HOMOLOG"/>
    <property type="match status" value="1"/>
</dbReference>
<dbReference type="Pfam" id="PF09766">
    <property type="entry name" value="FmiP_Thoc5"/>
    <property type="match status" value="1"/>
</dbReference>
<comment type="function">
    <text evidence="2">Component of the THO subcomplex of the TREX complex which is thought to couple mRNA transcription, processing and nuclear export, and which specifically associates with spliced mRNA and not with unspliced pre-mRNA. Plays a key structural role in the oligomerization of the THO-ddx39b complex. TREX is recruited to spliced mRNAs by a transcription-independent mechanism, binds to mRNA upstream of the exon-junction complex (EJC) and is recruited in a splicing- and cap-dependent manner to a region near the 5' end of the mRNA where it functions in mRNA export to the cytoplasm via the TAP/NXF1 pathway. May be involved in cell differentiation.</text>
</comment>
<comment type="subunit">
    <text evidence="2">Component of the THO subcomplex, which is composed of thoc1, thoc2, thoc3, thoc5, thoc6 and thoc7 (By similarity). Component of the transcription/export (TREX) complex at least composed of alyref/thoc4, ddx39b, sarnp/cip29, chtop and the THO subcomplex (By similarity).</text>
</comment>
<comment type="subcellular location">
    <subcellularLocation>
        <location evidence="1">Nucleus</location>
    </subcellularLocation>
    <subcellularLocation>
        <location evidence="1">Nucleus speckle</location>
    </subcellularLocation>
    <subcellularLocation>
        <location evidence="1">Cytoplasm</location>
    </subcellularLocation>
</comment>
<comment type="similarity">
    <text evidence="4">Belongs to the THOC5 family.</text>
</comment>
<reference key="1">
    <citation type="submission" date="2004-03" db="EMBL/GenBank/DDBJ databases">
        <authorList>
            <consortium name="NIH - Zebrafish Gene Collection (ZGC) project"/>
        </authorList>
    </citation>
    <scope>NUCLEOTIDE SEQUENCE [LARGE SCALE MRNA]</scope>
    <source>
        <tissue>Kidney</tissue>
    </source>
</reference>
<evidence type="ECO:0000250" key="1"/>
<evidence type="ECO:0000250" key="2">
    <source>
        <dbReference type="UniProtKB" id="Q13769"/>
    </source>
</evidence>
<evidence type="ECO:0000256" key="3">
    <source>
        <dbReference type="SAM" id="MobiDB-lite"/>
    </source>
</evidence>
<evidence type="ECO:0000305" key="4"/>
<name>THOC5_DANRE</name>
<keyword id="KW-0963">Cytoplasm</keyword>
<keyword id="KW-0221">Differentiation</keyword>
<keyword id="KW-0507">mRNA processing</keyword>
<keyword id="KW-0508">mRNA splicing</keyword>
<keyword id="KW-0509">mRNA transport</keyword>
<keyword id="KW-0539">Nucleus</keyword>
<keyword id="KW-1185">Reference proteome</keyword>
<keyword id="KW-0694">RNA-binding</keyword>
<keyword id="KW-0813">Transport</keyword>
<feature type="chain" id="PRO_0000310558" description="THO complex subunit 5 homolog">
    <location>
        <begin position="1"/>
        <end position="684"/>
    </location>
</feature>
<feature type="region of interest" description="Disordered" evidence="3">
    <location>
        <begin position="1"/>
        <end position="32"/>
    </location>
</feature>
<feature type="region of interest" description="Disordered" evidence="3">
    <location>
        <begin position="296"/>
        <end position="337"/>
    </location>
</feature>
<feature type="short sequence motif" description="Nuclear localization signal" evidence="1">
    <location>
        <begin position="7"/>
        <end position="10"/>
    </location>
</feature>
<feature type="compositionally biased region" description="Basic and acidic residues" evidence="3">
    <location>
        <begin position="22"/>
        <end position="32"/>
    </location>
</feature>
<feature type="compositionally biased region" description="Basic and acidic residues" evidence="3">
    <location>
        <begin position="296"/>
        <end position="305"/>
    </location>
</feature>
<feature type="compositionally biased region" description="Acidic residues" evidence="3">
    <location>
        <begin position="306"/>
        <end position="320"/>
    </location>
</feature>
<feature type="sequence conflict" description="In Ref. 1; AAH45980." evidence="4" ref="1">
    <original>D</original>
    <variation>E</variation>
    <location>
        <position position="196"/>
    </location>
</feature>
<feature type="sequence conflict" description="In Ref. 1; AAH45980." evidence="4" ref="1">
    <original>K</original>
    <variation>E</variation>
    <location>
        <position position="553"/>
    </location>
</feature>
<gene>
    <name type="primary">thoc5</name>
    <name type="ORF">zgc:76912</name>
</gene>